<gene>
    <name evidence="5" type="primary">col-99</name>
    <name type="ORF">CBG01652</name>
</gene>
<accession>A8WR59</accession>
<proteinExistence type="inferred from homology"/>
<feature type="signal peptide" evidence="3">
    <location>
        <begin position="1"/>
        <end status="unknown"/>
    </location>
</feature>
<feature type="chain" id="PRO_0000367043" description="Putative cuticle collagen 99" evidence="3">
    <location>
        <begin status="unknown"/>
        <end position="686"/>
    </location>
</feature>
<feature type="region of interest" description="Disordered" evidence="4">
    <location>
        <begin position="42"/>
        <end position="79"/>
    </location>
</feature>
<feature type="region of interest" description="Triple-helical region" evidence="3">
    <location>
        <begin position="142"/>
        <end position="201"/>
    </location>
</feature>
<feature type="region of interest" description="Disordered" evidence="4">
    <location>
        <begin position="163"/>
        <end position="444"/>
    </location>
</feature>
<feature type="region of interest" description="Triple-helical region" evidence="3">
    <location>
        <begin position="230"/>
        <end position="263"/>
    </location>
</feature>
<feature type="region of interest" description="Triple-helical region" evidence="3">
    <location>
        <begin position="268"/>
        <end position="296"/>
    </location>
</feature>
<feature type="region of interest" description="Triple-helical region" evidence="3">
    <location>
        <begin position="394"/>
        <end position="439"/>
    </location>
</feature>
<feature type="region of interest" description="Disordered" evidence="4">
    <location>
        <begin position="475"/>
        <end position="650"/>
    </location>
</feature>
<feature type="region of interest" description="Triple-helical region" evidence="3">
    <location>
        <begin position="479"/>
        <end position="536"/>
    </location>
</feature>
<feature type="region of interest" description="Triple-helical region" evidence="3">
    <location>
        <begin position="538"/>
        <end position="576"/>
    </location>
</feature>
<feature type="region of interest" description="Triple-helical region" evidence="3">
    <location>
        <begin position="577"/>
        <end position="636"/>
    </location>
</feature>
<feature type="compositionally biased region" description="Pro residues" evidence="4">
    <location>
        <begin position="67"/>
        <end position="79"/>
    </location>
</feature>
<feature type="compositionally biased region" description="Pro residues" evidence="4">
    <location>
        <begin position="231"/>
        <end position="243"/>
    </location>
</feature>
<feature type="compositionally biased region" description="Basic and acidic residues" evidence="4">
    <location>
        <begin position="246"/>
        <end position="256"/>
    </location>
</feature>
<feature type="compositionally biased region" description="Low complexity" evidence="4">
    <location>
        <begin position="306"/>
        <end position="318"/>
    </location>
</feature>
<feature type="compositionally biased region" description="Basic and acidic residues" evidence="4">
    <location>
        <begin position="361"/>
        <end position="373"/>
    </location>
</feature>
<feature type="compositionally biased region" description="Basic and acidic residues" evidence="4">
    <location>
        <begin position="401"/>
        <end position="417"/>
    </location>
</feature>
<feature type="compositionally biased region" description="Pro residues" evidence="4">
    <location>
        <begin position="540"/>
        <end position="549"/>
    </location>
</feature>
<feature type="compositionally biased region" description="Low complexity" evidence="4">
    <location>
        <begin position="563"/>
        <end position="581"/>
    </location>
</feature>
<feature type="glycosylation site" description="N-linked (GlcNAc...) asparagine" evidence="3">
    <location>
        <position position="446"/>
    </location>
</feature>
<feature type="glycosylation site" description="N-linked (GlcNAc...) asparagine" evidence="3">
    <location>
        <position position="535"/>
    </location>
</feature>
<dbReference type="EMBL" id="HE601298">
    <property type="protein sequence ID" value="CAP22967.2"/>
    <property type="molecule type" value="Genomic_DNA"/>
</dbReference>
<dbReference type="FunCoup" id="A8WR59">
    <property type="interactions" value="156"/>
</dbReference>
<dbReference type="STRING" id="6238.A8WR59"/>
<dbReference type="GlyCosmos" id="A8WR59">
    <property type="glycosylation" value="2 sites, No reported glycans"/>
</dbReference>
<dbReference type="WormBase" id="CBG01652a">
    <property type="protein sequence ID" value="CBP42766"/>
    <property type="gene ID" value="WBGene00024856"/>
    <property type="gene designation" value="Cbr-col-99"/>
</dbReference>
<dbReference type="eggNOG" id="KOG3544">
    <property type="taxonomic scope" value="Eukaryota"/>
</dbReference>
<dbReference type="HOGENOM" id="CLU_020867_0_0_1"/>
<dbReference type="InParanoid" id="A8WR59"/>
<dbReference type="OMA" id="CSWKPME"/>
<dbReference type="Proteomes" id="UP000008549">
    <property type="component" value="Unassembled WGS sequence"/>
</dbReference>
<dbReference type="GO" id="GO:0005587">
    <property type="term" value="C:collagen type IV trimer"/>
    <property type="evidence" value="ECO:0000318"/>
    <property type="project" value="GO_Central"/>
</dbReference>
<dbReference type="GO" id="GO:0031012">
    <property type="term" value="C:extracellular matrix"/>
    <property type="evidence" value="ECO:0000318"/>
    <property type="project" value="GO_Central"/>
</dbReference>
<dbReference type="GO" id="GO:0005615">
    <property type="term" value="C:extracellular space"/>
    <property type="evidence" value="ECO:0000318"/>
    <property type="project" value="GO_Central"/>
</dbReference>
<dbReference type="GO" id="GO:0030020">
    <property type="term" value="F:extracellular matrix structural constituent conferring tensile strength"/>
    <property type="evidence" value="ECO:0000318"/>
    <property type="project" value="GO_Central"/>
</dbReference>
<dbReference type="GO" id="GO:0042302">
    <property type="term" value="F:structural constituent of cuticle"/>
    <property type="evidence" value="ECO:0007669"/>
    <property type="project" value="UniProtKB-KW"/>
</dbReference>
<dbReference type="InterPro" id="IPR008160">
    <property type="entry name" value="Collagen"/>
</dbReference>
<dbReference type="InterPro" id="IPR050149">
    <property type="entry name" value="Collagen_superfamily"/>
</dbReference>
<dbReference type="PANTHER" id="PTHR24023:SF1112">
    <property type="entry name" value="COL_CUTICLE_N DOMAIN-CONTAINING PROTEIN-RELATED"/>
    <property type="match status" value="1"/>
</dbReference>
<dbReference type="PANTHER" id="PTHR24023">
    <property type="entry name" value="COLLAGEN ALPHA"/>
    <property type="match status" value="1"/>
</dbReference>
<dbReference type="Pfam" id="PF01391">
    <property type="entry name" value="Collagen"/>
    <property type="match status" value="4"/>
</dbReference>
<sequence>MCCYLFQQRERERKGTLLTGEAYKLCETITLLDVLQIEQDIPPIGNSDDNSDDVAKSRKVRNSCMCPPGPPGERGPVGPPGLPGLPAPYYRRPRVPLSNVVFVVVIVIVFFKFQNLDESISRKMRAFGMLYSPDGQAIQLRGMPGPPGPAGPKGLRGYPGFPGPIGLDGPRGLPGTPGSKGERGERGPVGPPGFPGPKGDRGVMTGPFGVHGQHPAPSGPIGHHTTMNIGPPGPPGPPGPPGPAGRDGRHGMKGDRGLPGFDGESKIGPKGETGNPGRDGIPGARGPPGERGEKGDTAFLSTYPRGQSVSTVSSSGSQGPPGPPGPPGVCQVSQCIGVQGPPGIPGEPGRTIIGPQGPPGEKGERGERGETGDKGPPGTPGAASLLNGGKALVGPPGPPGRDGRPGEKGEKGEHGLRGDMGLPGPEGTPGKRGRRGRHGISLVAPNGTINEDLKKLLKTELMPLLIEDISELRGKNVIPGPPGPPGPRGHHGPIGPAGERGPQGLPGHSGERGERGDIGPPGLPGQPGAAESSGNQSGPRGPPGLPGPPGEKGDLGPPGLPGQPGALGLPGHPGPMGLRGPHGTEGKQGKQGPEGPKGYPGPMGPQGPPGNDGEPGIDGRPGPAGEKGDQGIPGLDAPCPTGPDGLPLPYCSWKPMDGKNDVWERRKRATLPRSESVPEERTYIKN</sequence>
<comment type="function">
    <text evidence="2">Nematode cuticles are composed largely of collagen-like proteins. The cuticle functions both as an exoskeleton and as a barrier to protect the worm from its environment (By similarity).</text>
</comment>
<comment type="subunit">
    <text evidence="2">Collagen polypeptide chains are complexed within the cuticle by disulfide bonds and other types of covalent cross-links.</text>
</comment>
<comment type="similarity">
    <text evidence="3">Belongs to the cuticular collagen family.</text>
</comment>
<evidence type="ECO:0000250" key="1">
    <source>
        <dbReference type="UniProtKB" id="O76368"/>
    </source>
</evidence>
<evidence type="ECO:0000250" key="2">
    <source>
        <dbReference type="UniProtKB" id="Q09457"/>
    </source>
</evidence>
<evidence type="ECO:0000255" key="3"/>
<evidence type="ECO:0000256" key="4">
    <source>
        <dbReference type="SAM" id="MobiDB-lite"/>
    </source>
</evidence>
<evidence type="ECO:0000312" key="5">
    <source>
        <dbReference type="EMBL" id="CAP22967.2"/>
    </source>
</evidence>
<organism>
    <name type="scientific">Caenorhabditis briggsae</name>
    <dbReference type="NCBI Taxonomy" id="6238"/>
    <lineage>
        <taxon>Eukaryota</taxon>
        <taxon>Metazoa</taxon>
        <taxon>Ecdysozoa</taxon>
        <taxon>Nematoda</taxon>
        <taxon>Chromadorea</taxon>
        <taxon>Rhabditida</taxon>
        <taxon>Rhabditina</taxon>
        <taxon>Rhabditomorpha</taxon>
        <taxon>Rhabditoidea</taxon>
        <taxon>Rhabditidae</taxon>
        <taxon>Peloderinae</taxon>
        <taxon>Caenorhabditis</taxon>
    </lineage>
</organism>
<name>COL99_CAEBR</name>
<keyword id="KW-0176">Collagen</keyword>
<keyword id="KW-0193">Cuticle</keyword>
<keyword id="KW-1015">Disulfide bond</keyword>
<keyword id="KW-0325">Glycoprotein</keyword>
<keyword id="KW-1185">Reference proteome</keyword>
<keyword id="KW-0677">Repeat</keyword>
<keyword id="KW-0732">Signal</keyword>
<protein>
    <recommendedName>
        <fullName evidence="1">Putative cuticle collagen 99</fullName>
    </recommendedName>
</protein>
<reference evidence="5" key="1">
    <citation type="journal article" date="2003" name="PLoS Biol.">
        <title>The genome sequence of Caenorhabditis briggsae: a platform for comparative genomics.</title>
        <authorList>
            <person name="Stein L.D."/>
            <person name="Bao Z."/>
            <person name="Blasiar D."/>
            <person name="Blumenthal T."/>
            <person name="Brent M.R."/>
            <person name="Chen N."/>
            <person name="Chinwalla A."/>
            <person name="Clarke L."/>
            <person name="Clee C."/>
            <person name="Coghlan A."/>
            <person name="Coulson A."/>
            <person name="D'Eustachio P."/>
            <person name="Fitch D.H.A."/>
            <person name="Fulton L.A."/>
            <person name="Fulton R.E."/>
            <person name="Griffiths-Jones S."/>
            <person name="Harris T.W."/>
            <person name="Hillier L.W."/>
            <person name="Kamath R."/>
            <person name="Kuwabara P.E."/>
            <person name="Mardis E.R."/>
            <person name="Marra M.A."/>
            <person name="Miner T.L."/>
            <person name="Minx P."/>
            <person name="Mullikin J.C."/>
            <person name="Plumb R.W."/>
            <person name="Rogers J."/>
            <person name="Schein J.E."/>
            <person name="Sohrmann M."/>
            <person name="Spieth J."/>
            <person name="Stajich J.E."/>
            <person name="Wei C."/>
            <person name="Willey D."/>
            <person name="Wilson R.K."/>
            <person name="Durbin R.M."/>
            <person name="Waterston R.H."/>
        </authorList>
    </citation>
    <scope>NUCLEOTIDE SEQUENCE [LARGE SCALE GENOMIC DNA]</scope>
    <source>
        <strain evidence="5">AF16</strain>
    </source>
</reference>